<feature type="chain" id="PRO_0000273248" description="Ethylmalonyl-CoA decarboxylase">
    <location>
        <begin position="1"/>
        <end position="301"/>
    </location>
</feature>
<feature type="modified residue" description="N6-acetyllysine; alternate" evidence="1">
    <location>
        <position position="211"/>
    </location>
</feature>
<feature type="modified residue" description="N6-succinyllysine; alternate" evidence="1">
    <location>
        <position position="211"/>
    </location>
</feature>
<feature type="modified residue" description="N6-succinyllysine" evidence="1">
    <location>
        <position position="295"/>
    </location>
</feature>
<keyword id="KW-0007">Acetylation</keyword>
<keyword id="KW-0963">Cytoplasm</keyword>
<keyword id="KW-0456">Lyase</keyword>
<keyword id="KW-1185">Reference proteome</keyword>
<protein>
    <recommendedName>
        <fullName>Ethylmalonyl-CoA decarboxylase</fullName>
        <ecNumber evidence="1">4.1.1.94</ecNumber>
    </recommendedName>
    <alternativeName>
        <fullName>Enoyl-CoA hydratase domain-containing protein 1</fullName>
    </alternativeName>
    <alternativeName>
        <fullName>Methylmalonyl-CoA decarboxylase</fullName>
        <shortName>MMCD</shortName>
    </alternativeName>
</protein>
<reference key="1">
    <citation type="submission" date="2004-11" db="EMBL/GenBank/DDBJ databases">
        <authorList>
            <consortium name="The German cDNA consortium"/>
        </authorList>
    </citation>
    <scope>NUCLEOTIDE SEQUENCE [LARGE SCALE MRNA]</scope>
    <source>
        <tissue>Brain cortex</tissue>
    </source>
</reference>
<accession>Q5R4W0</accession>
<comment type="function">
    <text evidence="1">Decarboxylates ethylmalonyl-CoA, a potentially toxic metabolite, to form butyryl-CoA, suggesting it might be involved in metabolite proofreading. Acts preferentially on (S)-ethylmalonyl-CoA but also has some activity on the (R)-isomer. Also has methylmalonyl-CoA decarboxylase activity at lower level.</text>
</comment>
<comment type="catalytic activity">
    <reaction evidence="1">
        <text>(2S)-ethylmalonyl-CoA + H(+) = butanoyl-CoA + CO2</text>
        <dbReference type="Rhea" id="RHEA:32131"/>
        <dbReference type="ChEBI" id="CHEBI:15378"/>
        <dbReference type="ChEBI" id="CHEBI:16526"/>
        <dbReference type="ChEBI" id="CHEBI:57371"/>
        <dbReference type="ChEBI" id="CHEBI:60909"/>
        <dbReference type="EC" id="4.1.1.94"/>
    </reaction>
    <physiologicalReaction direction="left-to-right" evidence="1">
        <dbReference type="Rhea" id="RHEA:32132"/>
    </physiologicalReaction>
</comment>
<comment type="catalytic activity">
    <reaction evidence="1">
        <text>(S)-methylmalonyl-CoA + H(+) = propanoyl-CoA + CO2</text>
        <dbReference type="Rhea" id="RHEA:61340"/>
        <dbReference type="ChEBI" id="CHEBI:15378"/>
        <dbReference type="ChEBI" id="CHEBI:16526"/>
        <dbReference type="ChEBI" id="CHEBI:57327"/>
        <dbReference type="ChEBI" id="CHEBI:57392"/>
        <dbReference type="EC" id="4.1.1.94"/>
    </reaction>
    <physiologicalReaction direction="left-to-right" evidence="1">
        <dbReference type="Rhea" id="RHEA:61341"/>
    </physiologicalReaction>
</comment>
<comment type="catalytic activity">
    <reaction evidence="1">
        <text>(2R)-ethylmalonyl-CoA + H(+) = butanoyl-CoA + CO2</text>
        <dbReference type="Rhea" id="RHEA:59540"/>
        <dbReference type="ChEBI" id="CHEBI:15378"/>
        <dbReference type="ChEBI" id="CHEBI:16526"/>
        <dbReference type="ChEBI" id="CHEBI:57371"/>
        <dbReference type="ChEBI" id="CHEBI:85316"/>
        <dbReference type="EC" id="4.1.1.94"/>
    </reaction>
    <physiologicalReaction direction="left-to-right" evidence="1">
        <dbReference type="Rhea" id="RHEA:59541"/>
    </physiologicalReaction>
</comment>
<comment type="subcellular location">
    <subcellularLocation>
        <location evidence="1">Cytoplasm</location>
        <location evidence="1">Cytosol</location>
    </subcellularLocation>
</comment>
<comment type="similarity">
    <text evidence="2">Belongs to the enoyl-CoA hydratase/isomerase family.</text>
</comment>
<organism>
    <name type="scientific">Pongo abelii</name>
    <name type="common">Sumatran orangutan</name>
    <name type="synonym">Pongo pygmaeus abelii</name>
    <dbReference type="NCBI Taxonomy" id="9601"/>
    <lineage>
        <taxon>Eukaryota</taxon>
        <taxon>Metazoa</taxon>
        <taxon>Chordata</taxon>
        <taxon>Craniata</taxon>
        <taxon>Vertebrata</taxon>
        <taxon>Euteleostomi</taxon>
        <taxon>Mammalia</taxon>
        <taxon>Eutheria</taxon>
        <taxon>Euarchontoglires</taxon>
        <taxon>Primates</taxon>
        <taxon>Haplorrhini</taxon>
        <taxon>Catarrhini</taxon>
        <taxon>Hominidae</taxon>
        <taxon>Pongo</taxon>
    </lineage>
</organism>
<gene>
    <name type="primary">ECHDC1</name>
</gene>
<dbReference type="EC" id="4.1.1.94" evidence="1"/>
<dbReference type="EMBL" id="CR861131">
    <property type="protein sequence ID" value="CAH93206.1"/>
    <property type="molecule type" value="mRNA"/>
</dbReference>
<dbReference type="EMBL" id="CR925967">
    <property type="protein sequence ID" value="CAI29618.1"/>
    <property type="molecule type" value="mRNA"/>
</dbReference>
<dbReference type="RefSeq" id="NP_001126886.1">
    <property type="nucleotide sequence ID" value="NM_001133414.1"/>
</dbReference>
<dbReference type="RefSeq" id="XP_009240496.1">
    <property type="nucleotide sequence ID" value="XM_009242221.4"/>
</dbReference>
<dbReference type="SMR" id="Q5R4W0"/>
<dbReference type="STRING" id="9601.ENSPPYP00000024266"/>
<dbReference type="Ensembl" id="ENSPPYT00000019781.2">
    <property type="protein sequence ID" value="ENSPPYP00000019030.2"/>
    <property type="gene ID" value="ENSPPYG00000016995.3"/>
</dbReference>
<dbReference type="GeneID" id="100173900"/>
<dbReference type="KEGG" id="pon:100173900"/>
<dbReference type="CTD" id="55862"/>
<dbReference type="eggNOG" id="KOG1680">
    <property type="taxonomic scope" value="Eukaryota"/>
</dbReference>
<dbReference type="GeneTree" id="ENSGT00880000138038"/>
<dbReference type="InParanoid" id="Q5R4W0"/>
<dbReference type="OrthoDB" id="448450at2759"/>
<dbReference type="Proteomes" id="UP000001595">
    <property type="component" value="Chromosome 6"/>
</dbReference>
<dbReference type="GO" id="GO:0005829">
    <property type="term" value="C:cytosol"/>
    <property type="evidence" value="ECO:0000250"/>
    <property type="project" value="UniProtKB"/>
</dbReference>
<dbReference type="GO" id="GO:0016831">
    <property type="term" value="F:carboxy-lyase activity"/>
    <property type="evidence" value="ECO:0000250"/>
    <property type="project" value="UniProtKB"/>
</dbReference>
<dbReference type="GO" id="GO:0004492">
    <property type="term" value="F:methyl/ethyl malonyl-CoA decarboxylase activity"/>
    <property type="evidence" value="ECO:0007669"/>
    <property type="project" value="UniProtKB-EC"/>
</dbReference>
<dbReference type="GO" id="GO:0006635">
    <property type="term" value="P:fatty acid beta-oxidation"/>
    <property type="evidence" value="ECO:0007669"/>
    <property type="project" value="TreeGrafter"/>
</dbReference>
<dbReference type="CDD" id="cd06558">
    <property type="entry name" value="crotonase-like"/>
    <property type="match status" value="1"/>
</dbReference>
<dbReference type="FunFam" id="3.90.226.10:FF:000040">
    <property type="entry name" value="Ethylmalonyl-CoA decarboxylase 1"/>
    <property type="match status" value="1"/>
</dbReference>
<dbReference type="Gene3D" id="3.90.226.10">
    <property type="entry name" value="2-enoyl-CoA Hydratase, Chain A, domain 1"/>
    <property type="match status" value="1"/>
</dbReference>
<dbReference type="InterPro" id="IPR029045">
    <property type="entry name" value="ClpP/crotonase-like_dom_sf"/>
</dbReference>
<dbReference type="InterPro" id="IPR018376">
    <property type="entry name" value="Enoyl-CoA_hyd/isom_CS"/>
</dbReference>
<dbReference type="InterPro" id="IPR001753">
    <property type="entry name" value="Enoyl-CoA_hydra/iso"/>
</dbReference>
<dbReference type="PANTHER" id="PTHR11941">
    <property type="entry name" value="ENOYL-COA HYDRATASE-RELATED"/>
    <property type="match status" value="1"/>
</dbReference>
<dbReference type="PANTHER" id="PTHR11941:SF27">
    <property type="entry name" value="ETHYLMALONYL-COA DECARBOXYLASE"/>
    <property type="match status" value="1"/>
</dbReference>
<dbReference type="Pfam" id="PF00378">
    <property type="entry name" value="ECH_1"/>
    <property type="match status" value="1"/>
</dbReference>
<dbReference type="SUPFAM" id="SSF52096">
    <property type="entry name" value="ClpP/crotonase"/>
    <property type="match status" value="1"/>
</dbReference>
<dbReference type="PROSITE" id="PS00166">
    <property type="entry name" value="ENOYL_COA_HYDRATASE"/>
    <property type="match status" value="1"/>
</dbReference>
<sequence>MAKSLLKTSSLSGRTKLLHQTGLSLYSTSHGFYEEEVKKTLQQFPGGSIDLQKEDNGIGILTLNNPSKMNAFSGVMMLQLLEKVIELENWTEGKGLIVRGAKNTFSSGSDLNAVKSLGTPEDGMAVCMFMQNTLTRFMRLPLISVALVQGWALGGGAEFTTACDFRLMTPESKIRFVHKEMGIIPSWGGTTRLVEIIGSRQALKVLSGALKLDSKNALNIGMVEEVLQSSDETKSLEEAQEWLKQFIQGPPEVIRALKKSVCSGRELYLEEALQNERDLLGTVWGGPANLEAIAKKGKFNK</sequence>
<evidence type="ECO:0000250" key="1">
    <source>
        <dbReference type="UniProtKB" id="Q9D9V3"/>
    </source>
</evidence>
<evidence type="ECO:0000305" key="2"/>
<name>ECHD1_PONAB</name>
<proteinExistence type="evidence at transcript level"/>